<organism>
    <name type="scientific">Rattus norvegicus</name>
    <name type="common">Rat</name>
    <dbReference type="NCBI Taxonomy" id="10116"/>
    <lineage>
        <taxon>Eukaryota</taxon>
        <taxon>Metazoa</taxon>
        <taxon>Chordata</taxon>
        <taxon>Craniata</taxon>
        <taxon>Vertebrata</taxon>
        <taxon>Euteleostomi</taxon>
        <taxon>Mammalia</taxon>
        <taxon>Eutheria</taxon>
        <taxon>Euarchontoglires</taxon>
        <taxon>Glires</taxon>
        <taxon>Rodentia</taxon>
        <taxon>Myomorpha</taxon>
        <taxon>Muroidea</taxon>
        <taxon>Muridae</taxon>
        <taxon>Murinae</taxon>
        <taxon>Rattus</taxon>
    </lineage>
</organism>
<evidence type="ECO:0000250" key="1"/>
<evidence type="ECO:0000250" key="2">
    <source>
        <dbReference type="UniProtKB" id="Q23288"/>
    </source>
</evidence>
<evidence type="ECO:0000250" key="3">
    <source>
        <dbReference type="UniProtKB" id="Q8BGQ1"/>
    </source>
</evidence>
<evidence type="ECO:0000250" key="4">
    <source>
        <dbReference type="UniProtKB" id="Q9H9C1"/>
    </source>
</evidence>
<evidence type="ECO:0000256" key="5">
    <source>
        <dbReference type="SAM" id="MobiDB-lite"/>
    </source>
</evidence>
<evidence type="ECO:0000305" key="6"/>
<evidence type="ECO:0007744" key="7">
    <source>
    </source>
</evidence>
<protein>
    <recommendedName>
        <fullName>Spermatogenesis-defective protein 39 homolog</fullName>
        <shortName>hSPE-39</shortName>
    </recommendedName>
    <alternativeName>
        <fullName>VPS33B-interacting protein in apical-basolateral polarity regulator</fullName>
    </alternativeName>
    <alternativeName>
        <fullName>VPS33B-interacting protein in polarity and apical restriction</fullName>
    </alternativeName>
</protein>
<gene>
    <name type="primary">Vipas39</name>
    <name type="synonym">Spe39</name>
    <name type="synonym">Vipar</name>
</gene>
<dbReference type="EMBL" id="BC087099">
    <property type="protein sequence ID" value="AAH87099.1"/>
    <property type="molecule type" value="mRNA"/>
</dbReference>
<dbReference type="RefSeq" id="NP_001094474.1">
    <property type="nucleotide sequence ID" value="NM_001101004.2"/>
</dbReference>
<dbReference type="SMR" id="Q5PQN6"/>
<dbReference type="FunCoup" id="Q5PQN6">
    <property type="interactions" value="4908"/>
</dbReference>
<dbReference type="IntAct" id="Q5PQN6">
    <property type="interactions" value="3"/>
</dbReference>
<dbReference type="STRING" id="10116.ENSRNOP00000073602"/>
<dbReference type="iPTMnet" id="Q5PQN6"/>
<dbReference type="PhosphoSitePlus" id="Q5PQN6"/>
<dbReference type="jPOST" id="Q5PQN6"/>
<dbReference type="PaxDb" id="10116-ENSRNOP00000066883"/>
<dbReference type="Ensembl" id="ENSRNOT00000073428.3">
    <property type="protein sequence ID" value="ENSRNOP00000066883.1"/>
    <property type="gene ID" value="ENSRNOG00000049223.3"/>
</dbReference>
<dbReference type="GeneID" id="681989"/>
<dbReference type="KEGG" id="rno:681989"/>
<dbReference type="AGR" id="RGD:1589291"/>
<dbReference type="CTD" id="63894"/>
<dbReference type="RGD" id="1589291">
    <property type="gene designation" value="Vipas39"/>
</dbReference>
<dbReference type="eggNOG" id="KOG4677">
    <property type="taxonomic scope" value="Eukaryota"/>
</dbReference>
<dbReference type="GeneTree" id="ENSGT00390000013955"/>
<dbReference type="InParanoid" id="Q5PQN6"/>
<dbReference type="PhylomeDB" id="Q5PQN6"/>
<dbReference type="PRO" id="PR:Q5PQN6"/>
<dbReference type="Proteomes" id="UP000002494">
    <property type="component" value="Chromosome 6"/>
</dbReference>
<dbReference type="Bgee" id="ENSRNOG00000049223">
    <property type="expression patterns" value="Expressed in heart and 20 other cell types or tissues"/>
</dbReference>
<dbReference type="ExpressionAtlas" id="Q5PQN6">
    <property type="expression patterns" value="baseline and differential"/>
</dbReference>
<dbReference type="GO" id="GO:0005737">
    <property type="term" value="C:cytoplasm"/>
    <property type="evidence" value="ECO:0000250"/>
    <property type="project" value="UniProtKB"/>
</dbReference>
<dbReference type="GO" id="GO:0005769">
    <property type="term" value="C:early endosome"/>
    <property type="evidence" value="ECO:0000266"/>
    <property type="project" value="RGD"/>
</dbReference>
<dbReference type="GO" id="GO:0005768">
    <property type="term" value="C:endosome"/>
    <property type="evidence" value="ECO:0000266"/>
    <property type="project" value="RGD"/>
</dbReference>
<dbReference type="GO" id="GO:0005794">
    <property type="term" value="C:Golgi apparatus"/>
    <property type="evidence" value="ECO:0000266"/>
    <property type="project" value="RGD"/>
</dbReference>
<dbReference type="GO" id="GO:0005770">
    <property type="term" value="C:late endosome"/>
    <property type="evidence" value="ECO:0000266"/>
    <property type="project" value="RGD"/>
</dbReference>
<dbReference type="GO" id="GO:0055037">
    <property type="term" value="C:recycling endosome"/>
    <property type="evidence" value="ECO:0000266"/>
    <property type="project" value="RGD"/>
</dbReference>
<dbReference type="GO" id="GO:0099023">
    <property type="term" value="C:vesicle tethering complex"/>
    <property type="evidence" value="ECO:0000266"/>
    <property type="project" value="RGD"/>
</dbReference>
<dbReference type="GO" id="GO:0044877">
    <property type="term" value="F:protein-containing complex binding"/>
    <property type="evidence" value="ECO:0000266"/>
    <property type="project" value="RGD"/>
</dbReference>
<dbReference type="GO" id="GO:0030154">
    <property type="term" value="P:cell differentiation"/>
    <property type="evidence" value="ECO:0007669"/>
    <property type="project" value="UniProtKB-KW"/>
</dbReference>
<dbReference type="GO" id="GO:0030199">
    <property type="term" value="P:collagen fibril organization"/>
    <property type="evidence" value="ECO:0000266"/>
    <property type="project" value="RGD"/>
</dbReference>
<dbReference type="GO" id="GO:0032963">
    <property type="term" value="P:collagen metabolic process"/>
    <property type="evidence" value="ECO:0000266"/>
    <property type="project" value="RGD"/>
</dbReference>
<dbReference type="GO" id="GO:0008333">
    <property type="term" value="P:endosome to lysosome transport"/>
    <property type="evidence" value="ECO:0000266"/>
    <property type="project" value="RGD"/>
</dbReference>
<dbReference type="GO" id="GO:0006886">
    <property type="term" value="P:intracellular protein transport"/>
    <property type="evidence" value="ECO:0000266"/>
    <property type="project" value="RGD"/>
</dbReference>
<dbReference type="GO" id="GO:0043687">
    <property type="term" value="P:post-translational protein modification"/>
    <property type="evidence" value="ECO:0000266"/>
    <property type="project" value="RGD"/>
</dbReference>
<dbReference type="GO" id="GO:0007283">
    <property type="term" value="P:spermatogenesis"/>
    <property type="evidence" value="ECO:0007669"/>
    <property type="project" value="UniProtKB-KW"/>
</dbReference>
<dbReference type="GO" id="GO:0007034">
    <property type="term" value="P:vacuolar transport"/>
    <property type="evidence" value="ECO:0000318"/>
    <property type="project" value="GO_Central"/>
</dbReference>
<dbReference type="InterPro" id="IPR040057">
    <property type="entry name" value="Spe-39"/>
</dbReference>
<dbReference type="PANTHER" id="PTHR13364">
    <property type="entry name" value="DEFECTIVE SPERMATOGENESIS PROTEIN 39"/>
    <property type="match status" value="1"/>
</dbReference>
<dbReference type="PANTHER" id="PTHR13364:SF6">
    <property type="entry name" value="SPERMATOGENESIS-DEFECTIVE PROTEIN 39 HOMOLOG"/>
    <property type="match status" value="1"/>
</dbReference>
<sequence>MNRTKGDEEEYWNSSKFKAFTFDDEDDELSQLKESKRAVNSLRDFVDDDDDDDLERVSWTGEPVGSISWSIKETAGSSGSTSEGREQMKGRNSFYTQLPKPPSTYSLSSFFRGRTRPGSFQSLSDALSDTPAKTYSPELGRPKGEYRDYSNDWSLSDTVRRLRQGKVLIFLKRTLSKEILFRELEVRQVALRHLIHFLKEIGDQKLLLDLFRFLDRTEELALSHYREHLNIQDPEKRKEFLKTCIGLPFSAEDSAHVQDQYTLLERQIIIEANDRHLESSGQTEIFRKHPRKASILNMPLVTTLFYACFYHYTESEGTFSSPVNLKKTFKIPDRQYVLTALAARAKLRAWNDVDALFTTKNWLGYTKKRAPIGFHRVVEILHKNSAPVQILQEYVNLVEDVDTKLNLATKFKCHDVVIDTCRDLKDRQQLLAYRSKVDKGSAEEEKIDVILSSSQIRWKN</sequence>
<accession>Q5PQN6</accession>
<reference key="1">
    <citation type="journal article" date="2004" name="Genome Res.">
        <title>The status, quality, and expansion of the NIH full-length cDNA project: the Mammalian Gene Collection (MGC).</title>
        <authorList>
            <consortium name="The MGC Project Team"/>
        </authorList>
    </citation>
    <scope>NUCLEOTIDE SEQUENCE [LARGE SCALE MRNA]</scope>
    <source>
        <tissue>Heart</tissue>
    </source>
</reference>
<reference key="2">
    <citation type="journal article" date="2012" name="Nat. Commun.">
        <title>Quantitative maps of protein phosphorylation sites across 14 different rat organs and tissues.</title>
        <authorList>
            <person name="Lundby A."/>
            <person name="Secher A."/>
            <person name="Lage K."/>
            <person name="Nordsborg N.B."/>
            <person name="Dmytriyev A."/>
            <person name="Lundby C."/>
            <person name="Olsen J.V."/>
        </authorList>
    </citation>
    <scope>PHOSPHORYLATION [LARGE SCALE ANALYSIS] AT SER-119 AND SER-122</scope>
    <scope>IDENTIFICATION BY MASS SPECTROMETRY [LARGE SCALE ANALYSIS]</scope>
</reference>
<comment type="function">
    <text evidence="2 4">Proposed to be involved in endosomal maturation implicating in part VPS33B. In epithelial cells, the VPS33B:VIPAS39 complex may play a role in the apical RAB11A-dependent recycling pathway and in the maintenance of the apical-basolateral polarity. May play a role in lysosomal trafficking, probably via association with the core HOPS complex in a discrete population of endosomes; the functions seems to be independent of VPS33B. May play a role in vesicular trafficking during spermatogenesis. May be involved in direct or indirect transcriptional regulation of E-cadherin (By similarity).</text>
</comment>
<comment type="subunit">
    <text evidence="3 4">Interacts with VPS33B (By similarity). Associates with the homotypic fusion and vacuole protein sorting (HOPS) complex; impaired by VPS33B. Interacts with RAB11A (By similarity).</text>
</comment>
<comment type="subcellular location">
    <subcellularLocation>
        <location evidence="1">Cytoplasm</location>
    </subcellularLocation>
    <subcellularLocation>
        <location evidence="1">Cytoplasmic vesicle</location>
    </subcellularLocation>
    <subcellularLocation>
        <location evidence="4">Early endosome</location>
    </subcellularLocation>
    <subcellularLocation>
        <location evidence="4">Recycling endosome</location>
    </subcellularLocation>
    <subcellularLocation>
        <location evidence="4">Late endosome</location>
    </subcellularLocation>
    <text evidence="4">Colocalizes in clusters with VPS33B at cytoplasmic organelles.</text>
</comment>
<comment type="similarity">
    <text evidence="6">Belongs to the SPE39 family.</text>
</comment>
<feature type="chain" id="PRO_0000395736" description="Spermatogenesis-defective protein 39 homolog">
    <location>
        <begin position="1"/>
        <end position="460"/>
    </location>
</feature>
<feature type="region of interest" description="Disordered" evidence="5">
    <location>
        <begin position="70"/>
        <end position="101"/>
    </location>
</feature>
<feature type="region of interest" description="Disordered" evidence="5">
    <location>
        <begin position="121"/>
        <end position="141"/>
    </location>
</feature>
<feature type="compositionally biased region" description="Low complexity" evidence="5">
    <location>
        <begin position="73"/>
        <end position="82"/>
    </location>
</feature>
<feature type="compositionally biased region" description="Polar residues" evidence="5">
    <location>
        <begin position="121"/>
        <end position="133"/>
    </location>
</feature>
<feature type="modified residue" description="Phosphothreonine" evidence="4">
    <location>
        <position position="21"/>
    </location>
</feature>
<feature type="modified residue" description="Phosphothreonine" evidence="3">
    <location>
        <position position="115"/>
    </location>
</feature>
<feature type="modified residue" description="Phosphoserine" evidence="7">
    <location>
        <position position="119"/>
    </location>
</feature>
<feature type="modified residue" description="Phosphoserine" evidence="7">
    <location>
        <position position="122"/>
    </location>
</feature>
<feature type="modified residue" description="Phosphoserine" evidence="4">
    <location>
        <position position="128"/>
    </location>
</feature>
<feature type="modified residue" description="Phosphothreonine" evidence="4">
    <location>
        <position position="130"/>
    </location>
</feature>
<proteinExistence type="evidence at protein level"/>
<name>SPE39_RAT</name>
<keyword id="KW-0963">Cytoplasm</keyword>
<keyword id="KW-0968">Cytoplasmic vesicle</keyword>
<keyword id="KW-0221">Differentiation</keyword>
<keyword id="KW-0967">Endosome</keyword>
<keyword id="KW-0597">Phosphoprotein</keyword>
<keyword id="KW-0653">Protein transport</keyword>
<keyword id="KW-1185">Reference proteome</keyword>
<keyword id="KW-0744">Spermatogenesis</keyword>
<keyword id="KW-0804">Transcription</keyword>
<keyword id="KW-0805">Transcription regulation</keyword>
<keyword id="KW-0813">Transport</keyword>